<keyword id="KW-0997">Cell inner membrane</keyword>
<keyword id="KW-1003">Cell membrane</keyword>
<keyword id="KW-0963">Cytoplasm</keyword>
<keyword id="KW-0342">GTP-binding</keyword>
<keyword id="KW-0472">Membrane</keyword>
<keyword id="KW-0547">Nucleotide-binding</keyword>
<keyword id="KW-0690">Ribosome biogenesis</keyword>
<keyword id="KW-0694">RNA-binding</keyword>
<keyword id="KW-0699">rRNA-binding</keyword>
<proteinExistence type="inferred from homology"/>
<sequence>MSEEKSYCGFVAIVGRPNVGKSTLLNKLLGQKISITSRKAQTTRHRIVGIHTEGPYQAIYVDTPGLHMEEKRAINRLMNKAASSSIGDVELVIFVVEGTRWTQDDEMVLNKLRDAKAPVILAVNKVDNVQEKADLLPHLQFLASQMNFLDIVPISAETGTNVDTIAAIVRKHLPEAIHHFPEDYITDRSQRFMASEIIREKLMRFLGAELPYSVTVEIERFVSNERGGYDINGLILVEREGQKKMVIGNKGAKIKTIGIEARKDMQEMFEAPVHLELWVKVKSGWADDERALRSLGYVDDL</sequence>
<feature type="chain" id="PRO_1000079702" description="GTPase Era">
    <location>
        <begin position="1"/>
        <end position="301"/>
    </location>
</feature>
<feature type="domain" description="Era-type G" evidence="2">
    <location>
        <begin position="7"/>
        <end position="175"/>
    </location>
</feature>
<feature type="domain" description="KH type-2" evidence="1">
    <location>
        <begin position="206"/>
        <end position="283"/>
    </location>
</feature>
<feature type="region of interest" description="G1" evidence="2">
    <location>
        <begin position="15"/>
        <end position="22"/>
    </location>
</feature>
<feature type="region of interest" description="G2" evidence="2">
    <location>
        <begin position="41"/>
        <end position="45"/>
    </location>
</feature>
<feature type="region of interest" description="G3" evidence="2">
    <location>
        <begin position="62"/>
        <end position="65"/>
    </location>
</feature>
<feature type="region of interest" description="G4" evidence="2">
    <location>
        <begin position="124"/>
        <end position="127"/>
    </location>
</feature>
<feature type="region of interest" description="G5" evidence="2">
    <location>
        <begin position="154"/>
        <end position="156"/>
    </location>
</feature>
<feature type="binding site" evidence="1">
    <location>
        <begin position="15"/>
        <end position="22"/>
    </location>
    <ligand>
        <name>GTP</name>
        <dbReference type="ChEBI" id="CHEBI:37565"/>
    </ligand>
</feature>
<feature type="binding site" evidence="1">
    <location>
        <begin position="62"/>
        <end position="66"/>
    </location>
    <ligand>
        <name>GTP</name>
        <dbReference type="ChEBI" id="CHEBI:37565"/>
    </ligand>
</feature>
<feature type="binding site" evidence="1">
    <location>
        <begin position="124"/>
        <end position="127"/>
    </location>
    <ligand>
        <name>GTP</name>
        <dbReference type="ChEBI" id="CHEBI:37565"/>
    </ligand>
</feature>
<gene>
    <name evidence="1" type="primary">era</name>
    <name type="ordered locus">KPN78578_28400</name>
    <name type="ORF">KPN_02891</name>
</gene>
<reference key="1">
    <citation type="submission" date="2006-09" db="EMBL/GenBank/DDBJ databases">
        <authorList>
            <consortium name="The Klebsiella pneumonia Genome Sequencing Project"/>
            <person name="McClelland M."/>
            <person name="Sanderson E.K."/>
            <person name="Spieth J."/>
            <person name="Clifton W.S."/>
            <person name="Latreille P."/>
            <person name="Sabo A."/>
            <person name="Pepin K."/>
            <person name="Bhonagiri V."/>
            <person name="Porwollik S."/>
            <person name="Ali J."/>
            <person name="Wilson R.K."/>
        </authorList>
    </citation>
    <scope>NUCLEOTIDE SEQUENCE [LARGE SCALE GENOMIC DNA]</scope>
    <source>
        <strain>ATCC 700721 / MGH 78578</strain>
    </source>
</reference>
<protein>
    <recommendedName>
        <fullName evidence="1">GTPase Era</fullName>
    </recommendedName>
</protein>
<name>ERA_KLEP7</name>
<evidence type="ECO:0000255" key="1">
    <source>
        <dbReference type="HAMAP-Rule" id="MF_00367"/>
    </source>
</evidence>
<evidence type="ECO:0000255" key="2">
    <source>
        <dbReference type="PROSITE-ProRule" id="PRU01050"/>
    </source>
</evidence>
<organism>
    <name type="scientific">Klebsiella pneumoniae subsp. pneumoniae (strain ATCC 700721 / MGH 78578)</name>
    <dbReference type="NCBI Taxonomy" id="272620"/>
    <lineage>
        <taxon>Bacteria</taxon>
        <taxon>Pseudomonadati</taxon>
        <taxon>Pseudomonadota</taxon>
        <taxon>Gammaproteobacteria</taxon>
        <taxon>Enterobacterales</taxon>
        <taxon>Enterobacteriaceae</taxon>
        <taxon>Klebsiella/Raoultella group</taxon>
        <taxon>Klebsiella</taxon>
        <taxon>Klebsiella pneumoniae complex</taxon>
    </lineage>
</organism>
<accession>A6TCI0</accession>
<dbReference type="EMBL" id="CP000647">
    <property type="protein sequence ID" value="ABR78301.1"/>
    <property type="molecule type" value="Genomic_DNA"/>
</dbReference>
<dbReference type="RefSeq" id="WP_002914063.1">
    <property type="nucleotide sequence ID" value="NC_009648.1"/>
</dbReference>
<dbReference type="SMR" id="A6TCI0"/>
<dbReference type="STRING" id="272620.KPN_02891"/>
<dbReference type="jPOST" id="A6TCI0"/>
<dbReference type="PaxDb" id="272620-KPN_02891"/>
<dbReference type="EnsemblBacteria" id="ABR78301">
    <property type="protein sequence ID" value="ABR78301"/>
    <property type="gene ID" value="KPN_02891"/>
</dbReference>
<dbReference type="KEGG" id="kpn:KPN_02891"/>
<dbReference type="HOGENOM" id="CLU_038009_1_2_6"/>
<dbReference type="Proteomes" id="UP000000265">
    <property type="component" value="Chromosome"/>
</dbReference>
<dbReference type="GO" id="GO:0005829">
    <property type="term" value="C:cytosol"/>
    <property type="evidence" value="ECO:0007669"/>
    <property type="project" value="TreeGrafter"/>
</dbReference>
<dbReference type="GO" id="GO:0005886">
    <property type="term" value="C:plasma membrane"/>
    <property type="evidence" value="ECO:0007669"/>
    <property type="project" value="UniProtKB-SubCell"/>
</dbReference>
<dbReference type="GO" id="GO:0005525">
    <property type="term" value="F:GTP binding"/>
    <property type="evidence" value="ECO:0007669"/>
    <property type="project" value="UniProtKB-UniRule"/>
</dbReference>
<dbReference type="GO" id="GO:0003924">
    <property type="term" value="F:GTPase activity"/>
    <property type="evidence" value="ECO:0007669"/>
    <property type="project" value="UniProtKB-UniRule"/>
</dbReference>
<dbReference type="GO" id="GO:0043024">
    <property type="term" value="F:ribosomal small subunit binding"/>
    <property type="evidence" value="ECO:0007669"/>
    <property type="project" value="TreeGrafter"/>
</dbReference>
<dbReference type="GO" id="GO:0070181">
    <property type="term" value="F:small ribosomal subunit rRNA binding"/>
    <property type="evidence" value="ECO:0007669"/>
    <property type="project" value="UniProtKB-UniRule"/>
</dbReference>
<dbReference type="GO" id="GO:0000028">
    <property type="term" value="P:ribosomal small subunit assembly"/>
    <property type="evidence" value="ECO:0007669"/>
    <property type="project" value="TreeGrafter"/>
</dbReference>
<dbReference type="CDD" id="cd04163">
    <property type="entry name" value="Era"/>
    <property type="match status" value="1"/>
</dbReference>
<dbReference type="CDD" id="cd22534">
    <property type="entry name" value="KH-II_Era"/>
    <property type="match status" value="1"/>
</dbReference>
<dbReference type="FunFam" id="3.30.300.20:FF:000003">
    <property type="entry name" value="GTPase Era"/>
    <property type="match status" value="1"/>
</dbReference>
<dbReference type="FunFam" id="3.40.50.300:FF:000094">
    <property type="entry name" value="GTPase Era"/>
    <property type="match status" value="1"/>
</dbReference>
<dbReference type="Gene3D" id="3.30.300.20">
    <property type="match status" value="1"/>
</dbReference>
<dbReference type="Gene3D" id="3.40.50.300">
    <property type="entry name" value="P-loop containing nucleotide triphosphate hydrolases"/>
    <property type="match status" value="1"/>
</dbReference>
<dbReference type="HAMAP" id="MF_00367">
    <property type="entry name" value="GTPase_Era"/>
    <property type="match status" value="1"/>
</dbReference>
<dbReference type="InterPro" id="IPR030388">
    <property type="entry name" value="G_ERA_dom"/>
</dbReference>
<dbReference type="InterPro" id="IPR006073">
    <property type="entry name" value="GTP-bd"/>
</dbReference>
<dbReference type="InterPro" id="IPR005662">
    <property type="entry name" value="GTPase_Era-like"/>
</dbReference>
<dbReference type="InterPro" id="IPR015946">
    <property type="entry name" value="KH_dom-like_a/b"/>
</dbReference>
<dbReference type="InterPro" id="IPR004044">
    <property type="entry name" value="KH_dom_type_2"/>
</dbReference>
<dbReference type="InterPro" id="IPR009019">
    <property type="entry name" value="KH_sf_prok-type"/>
</dbReference>
<dbReference type="InterPro" id="IPR027417">
    <property type="entry name" value="P-loop_NTPase"/>
</dbReference>
<dbReference type="InterPro" id="IPR005225">
    <property type="entry name" value="Small_GTP-bd"/>
</dbReference>
<dbReference type="NCBIfam" id="TIGR00436">
    <property type="entry name" value="era"/>
    <property type="match status" value="1"/>
</dbReference>
<dbReference type="NCBIfam" id="NF000908">
    <property type="entry name" value="PRK00089.1"/>
    <property type="match status" value="1"/>
</dbReference>
<dbReference type="NCBIfam" id="TIGR00231">
    <property type="entry name" value="small_GTP"/>
    <property type="match status" value="1"/>
</dbReference>
<dbReference type="PANTHER" id="PTHR42698">
    <property type="entry name" value="GTPASE ERA"/>
    <property type="match status" value="1"/>
</dbReference>
<dbReference type="PANTHER" id="PTHR42698:SF1">
    <property type="entry name" value="GTPASE ERA, MITOCHONDRIAL"/>
    <property type="match status" value="1"/>
</dbReference>
<dbReference type="Pfam" id="PF07650">
    <property type="entry name" value="KH_2"/>
    <property type="match status" value="1"/>
</dbReference>
<dbReference type="Pfam" id="PF01926">
    <property type="entry name" value="MMR_HSR1"/>
    <property type="match status" value="1"/>
</dbReference>
<dbReference type="SUPFAM" id="SSF52540">
    <property type="entry name" value="P-loop containing nucleoside triphosphate hydrolases"/>
    <property type="match status" value="1"/>
</dbReference>
<dbReference type="SUPFAM" id="SSF54814">
    <property type="entry name" value="Prokaryotic type KH domain (KH-domain type II)"/>
    <property type="match status" value="1"/>
</dbReference>
<dbReference type="PROSITE" id="PS51713">
    <property type="entry name" value="G_ERA"/>
    <property type="match status" value="1"/>
</dbReference>
<dbReference type="PROSITE" id="PS50823">
    <property type="entry name" value="KH_TYPE_2"/>
    <property type="match status" value="1"/>
</dbReference>
<comment type="function">
    <text evidence="1">An essential GTPase that binds both GDP and GTP, with rapid nucleotide exchange. Plays a role in 16S rRNA processing and 30S ribosomal subunit biogenesis and possibly also in cell cycle regulation and energy metabolism.</text>
</comment>
<comment type="subunit">
    <text evidence="1">Monomer.</text>
</comment>
<comment type="subcellular location">
    <subcellularLocation>
        <location>Cytoplasm</location>
    </subcellularLocation>
    <subcellularLocation>
        <location evidence="1">Cell inner membrane</location>
        <topology evidence="1">Peripheral membrane protein</topology>
    </subcellularLocation>
</comment>
<comment type="similarity">
    <text evidence="1 2">Belongs to the TRAFAC class TrmE-Era-EngA-EngB-Septin-like GTPase superfamily. Era GTPase family.</text>
</comment>